<reference key="1">
    <citation type="submission" date="2009-07" db="EMBL/GenBank/DDBJ databases">
        <title>Complete sequence of Geobacter sp. M21.</title>
        <authorList>
            <consortium name="US DOE Joint Genome Institute"/>
            <person name="Lucas S."/>
            <person name="Copeland A."/>
            <person name="Lapidus A."/>
            <person name="Glavina del Rio T."/>
            <person name="Dalin E."/>
            <person name="Tice H."/>
            <person name="Bruce D."/>
            <person name="Goodwin L."/>
            <person name="Pitluck S."/>
            <person name="Saunders E."/>
            <person name="Brettin T."/>
            <person name="Detter J.C."/>
            <person name="Han C."/>
            <person name="Larimer F."/>
            <person name="Land M."/>
            <person name="Hauser L."/>
            <person name="Kyrpides N."/>
            <person name="Ovchinnikova G."/>
            <person name="Lovley D."/>
        </authorList>
    </citation>
    <scope>NUCLEOTIDE SEQUENCE [LARGE SCALE GENOMIC DNA]</scope>
    <source>
        <strain>M21</strain>
    </source>
</reference>
<keyword id="KW-0143">Chaperone</keyword>
<keyword id="KW-0963">Cytoplasm</keyword>
<sequence length="96" mass="10576">MNLRPLQDRIIVKRVEEATMTAGGLYIPETAKEKPQQGEVVAVGNGKRGDDGKVYPIDLKVGDKVLFGKYAGSEVKLEGEDFLIMREDDILGVVEK</sequence>
<comment type="function">
    <text evidence="1">Together with the chaperonin GroEL, plays an essential role in assisting protein folding. The GroEL-GroES system forms a nano-cage that allows encapsulation of the non-native substrate proteins and provides a physical environment optimized to promote and accelerate protein folding. GroES binds to the apical surface of the GroEL ring, thereby capping the opening of the GroEL channel.</text>
</comment>
<comment type="subunit">
    <text evidence="1">Heptamer of 7 subunits arranged in a ring. Interacts with the chaperonin GroEL.</text>
</comment>
<comment type="subcellular location">
    <subcellularLocation>
        <location evidence="1">Cytoplasm</location>
    </subcellularLocation>
</comment>
<comment type="similarity">
    <text evidence="1">Belongs to the GroES chaperonin family.</text>
</comment>
<gene>
    <name evidence="1" type="primary">groES</name>
    <name evidence="1" type="synonym">groS</name>
    <name type="ordered locus">GM21_0232</name>
</gene>
<protein>
    <recommendedName>
        <fullName evidence="1">Co-chaperonin GroES</fullName>
    </recommendedName>
    <alternativeName>
        <fullName evidence="1">10 kDa chaperonin</fullName>
    </alternativeName>
    <alternativeName>
        <fullName evidence="1">Chaperonin-10</fullName>
        <shortName evidence="1">Cpn10</shortName>
    </alternativeName>
</protein>
<proteinExistence type="inferred from homology"/>
<feature type="chain" id="PRO_1000212116" description="Co-chaperonin GroES">
    <location>
        <begin position="1"/>
        <end position="96"/>
    </location>
</feature>
<accession>C6DY42</accession>
<organism>
    <name type="scientific">Geobacter sp. (strain M21)</name>
    <dbReference type="NCBI Taxonomy" id="443144"/>
    <lineage>
        <taxon>Bacteria</taxon>
        <taxon>Pseudomonadati</taxon>
        <taxon>Thermodesulfobacteriota</taxon>
        <taxon>Desulfuromonadia</taxon>
        <taxon>Geobacterales</taxon>
        <taxon>Geobacteraceae</taxon>
        <taxon>Geobacter</taxon>
    </lineage>
</organism>
<evidence type="ECO:0000255" key="1">
    <source>
        <dbReference type="HAMAP-Rule" id="MF_00580"/>
    </source>
</evidence>
<name>CH10_GEOSM</name>
<dbReference type="EMBL" id="CP001661">
    <property type="protein sequence ID" value="ACT16317.1"/>
    <property type="molecule type" value="Genomic_DNA"/>
</dbReference>
<dbReference type="SMR" id="C6DY42"/>
<dbReference type="STRING" id="443144.GM21_0232"/>
<dbReference type="KEGG" id="gem:GM21_0232"/>
<dbReference type="eggNOG" id="COG0234">
    <property type="taxonomic scope" value="Bacteria"/>
</dbReference>
<dbReference type="HOGENOM" id="CLU_132825_2_0_7"/>
<dbReference type="OrthoDB" id="9806791at2"/>
<dbReference type="GO" id="GO:0005737">
    <property type="term" value="C:cytoplasm"/>
    <property type="evidence" value="ECO:0007669"/>
    <property type="project" value="UniProtKB-SubCell"/>
</dbReference>
<dbReference type="GO" id="GO:0005524">
    <property type="term" value="F:ATP binding"/>
    <property type="evidence" value="ECO:0007669"/>
    <property type="project" value="InterPro"/>
</dbReference>
<dbReference type="GO" id="GO:0046872">
    <property type="term" value="F:metal ion binding"/>
    <property type="evidence" value="ECO:0007669"/>
    <property type="project" value="TreeGrafter"/>
</dbReference>
<dbReference type="GO" id="GO:0044183">
    <property type="term" value="F:protein folding chaperone"/>
    <property type="evidence" value="ECO:0007669"/>
    <property type="project" value="InterPro"/>
</dbReference>
<dbReference type="GO" id="GO:0051087">
    <property type="term" value="F:protein-folding chaperone binding"/>
    <property type="evidence" value="ECO:0007669"/>
    <property type="project" value="TreeGrafter"/>
</dbReference>
<dbReference type="GO" id="GO:0051082">
    <property type="term" value="F:unfolded protein binding"/>
    <property type="evidence" value="ECO:0007669"/>
    <property type="project" value="TreeGrafter"/>
</dbReference>
<dbReference type="GO" id="GO:0051085">
    <property type="term" value="P:chaperone cofactor-dependent protein refolding"/>
    <property type="evidence" value="ECO:0007669"/>
    <property type="project" value="TreeGrafter"/>
</dbReference>
<dbReference type="CDD" id="cd00320">
    <property type="entry name" value="cpn10"/>
    <property type="match status" value="1"/>
</dbReference>
<dbReference type="FunFam" id="2.30.33.40:FF:000001">
    <property type="entry name" value="10 kDa chaperonin"/>
    <property type="match status" value="1"/>
</dbReference>
<dbReference type="Gene3D" id="2.30.33.40">
    <property type="entry name" value="GroES chaperonin"/>
    <property type="match status" value="1"/>
</dbReference>
<dbReference type="HAMAP" id="MF_00580">
    <property type="entry name" value="CH10"/>
    <property type="match status" value="1"/>
</dbReference>
<dbReference type="InterPro" id="IPR020818">
    <property type="entry name" value="Chaperonin_GroES"/>
</dbReference>
<dbReference type="InterPro" id="IPR037124">
    <property type="entry name" value="Chaperonin_GroES_sf"/>
</dbReference>
<dbReference type="InterPro" id="IPR018369">
    <property type="entry name" value="Chaprnonin_Cpn10_CS"/>
</dbReference>
<dbReference type="InterPro" id="IPR011032">
    <property type="entry name" value="GroES-like_sf"/>
</dbReference>
<dbReference type="NCBIfam" id="NF001527">
    <property type="entry name" value="PRK00364.1-2"/>
    <property type="match status" value="1"/>
</dbReference>
<dbReference type="NCBIfam" id="NF001529">
    <property type="entry name" value="PRK00364.1-5"/>
    <property type="match status" value="1"/>
</dbReference>
<dbReference type="NCBIfam" id="NF001531">
    <property type="entry name" value="PRK00364.2-2"/>
    <property type="match status" value="1"/>
</dbReference>
<dbReference type="NCBIfam" id="NF001533">
    <property type="entry name" value="PRK00364.2-4"/>
    <property type="match status" value="1"/>
</dbReference>
<dbReference type="NCBIfam" id="NF001534">
    <property type="entry name" value="PRK00364.2-5"/>
    <property type="match status" value="1"/>
</dbReference>
<dbReference type="PANTHER" id="PTHR10772">
    <property type="entry name" value="10 KDA HEAT SHOCK PROTEIN"/>
    <property type="match status" value="1"/>
</dbReference>
<dbReference type="PANTHER" id="PTHR10772:SF58">
    <property type="entry name" value="CO-CHAPERONIN GROES"/>
    <property type="match status" value="1"/>
</dbReference>
<dbReference type="Pfam" id="PF00166">
    <property type="entry name" value="Cpn10"/>
    <property type="match status" value="1"/>
</dbReference>
<dbReference type="PRINTS" id="PR00297">
    <property type="entry name" value="CHAPERONIN10"/>
</dbReference>
<dbReference type="SMART" id="SM00883">
    <property type="entry name" value="Cpn10"/>
    <property type="match status" value="1"/>
</dbReference>
<dbReference type="SUPFAM" id="SSF50129">
    <property type="entry name" value="GroES-like"/>
    <property type="match status" value="1"/>
</dbReference>
<dbReference type="PROSITE" id="PS00681">
    <property type="entry name" value="CHAPERONINS_CPN10"/>
    <property type="match status" value="1"/>
</dbReference>